<organism>
    <name type="scientific">Mus musculus</name>
    <name type="common">Mouse</name>
    <dbReference type="NCBI Taxonomy" id="10090"/>
    <lineage>
        <taxon>Eukaryota</taxon>
        <taxon>Metazoa</taxon>
        <taxon>Chordata</taxon>
        <taxon>Craniata</taxon>
        <taxon>Vertebrata</taxon>
        <taxon>Euteleostomi</taxon>
        <taxon>Mammalia</taxon>
        <taxon>Eutheria</taxon>
        <taxon>Euarchontoglires</taxon>
        <taxon>Glires</taxon>
        <taxon>Rodentia</taxon>
        <taxon>Myomorpha</taxon>
        <taxon>Muroidea</taxon>
        <taxon>Muridae</taxon>
        <taxon>Murinae</taxon>
        <taxon>Mus</taxon>
        <taxon>Mus</taxon>
    </lineage>
</organism>
<evidence type="ECO:0000250" key="1">
    <source>
        <dbReference type="UniProtKB" id="Q91Y55"/>
    </source>
</evidence>
<evidence type="ECO:0000250" key="2">
    <source>
        <dbReference type="UniProtKB" id="Q9Y5I7"/>
    </source>
</evidence>
<evidence type="ECO:0000255" key="3"/>
<evidence type="ECO:0000269" key="4">
    <source>
    </source>
</evidence>
<evidence type="ECO:0000269" key="5">
    <source>
    </source>
</evidence>
<evidence type="ECO:0000303" key="6">
    <source>
    </source>
</evidence>
<evidence type="ECO:0000303" key="7">
    <source>
    </source>
</evidence>
<evidence type="ECO:0000305" key="8"/>
<evidence type="ECO:0000305" key="9">
    <source>
    </source>
</evidence>
<evidence type="ECO:0000305" key="10">
    <source>
    </source>
</evidence>
<evidence type="ECO:0000312" key="11">
    <source>
        <dbReference type="MGI" id="MGI:2148742"/>
    </source>
</evidence>
<protein>
    <recommendedName>
        <fullName evidence="7">Claudin-16</fullName>
    </recommendedName>
    <alternativeName>
        <fullName evidence="6">Paracellin-1</fullName>
    </alternativeName>
</protein>
<accession>Q925N4</accession>
<accession>Q542L7</accession>
<proteinExistence type="evidence at protein level"/>
<dbReference type="EMBL" id="AF323748">
    <property type="protein sequence ID" value="AAK49518.1"/>
    <property type="molecule type" value="mRNA"/>
</dbReference>
<dbReference type="EMBL" id="AK085268">
    <property type="protein sequence ID" value="BAC39406.1"/>
    <property type="molecule type" value="mRNA"/>
</dbReference>
<dbReference type="EMBL" id="AK085333">
    <property type="protein sequence ID" value="BAC39425.1"/>
    <property type="molecule type" value="mRNA"/>
</dbReference>
<dbReference type="CCDS" id="CCDS28088.1"/>
<dbReference type="RefSeq" id="NP_444471.1">
    <property type="nucleotide sequence ID" value="NM_053241.5"/>
</dbReference>
<dbReference type="SMR" id="Q925N4"/>
<dbReference type="FunCoup" id="Q925N4">
    <property type="interactions" value="256"/>
</dbReference>
<dbReference type="STRING" id="10090.ENSMUSP00000124528"/>
<dbReference type="iPTMnet" id="Q925N4"/>
<dbReference type="PhosphoSitePlus" id="Q925N4"/>
<dbReference type="PaxDb" id="10090-ENSMUSP00000124528"/>
<dbReference type="ProteomicsDB" id="285481"/>
<dbReference type="Antibodypedia" id="19357">
    <property type="antibodies" value="194 antibodies from 25 providers"/>
</dbReference>
<dbReference type="DNASU" id="114141"/>
<dbReference type="Ensembl" id="ENSMUST00000115302.2">
    <property type="protein sequence ID" value="ENSMUSP00000110957.2"/>
    <property type="gene ID" value="ENSMUSG00000038148.14"/>
</dbReference>
<dbReference type="Ensembl" id="ENSMUST00000161053.8">
    <property type="protein sequence ID" value="ENSMUSP00000124528.2"/>
    <property type="gene ID" value="ENSMUSG00000038148.14"/>
</dbReference>
<dbReference type="GeneID" id="114141"/>
<dbReference type="KEGG" id="mmu:114141"/>
<dbReference type="UCSC" id="uc007yva.2">
    <property type="organism name" value="mouse"/>
</dbReference>
<dbReference type="AGR" id="MGI:2148742"/>
<dbReference type="CTD" id="10686"/>
<dbReference type="MGI" id="MGI:2148742">
    <property type="gene designation" value="Cldn16"/>
</dbReference>
<dbReference type="VEuPathDB" id="HostDB:ENSMUSG00000038148"/>
<dbReference type="eggNOG" id="ENOG502QRY9">
    <property type="taxonomic scope" value="Eukaryota"/>
</dbReference>
<dbReference type="GeneTree" id="ENSGT00730000111162"/>
<dbReference type="HOGENOM" id="CLU_079378_1_0_1"/>
<dbReference type="InParanoid" id="Q925N4"/>
<dbReference type="OMA" id="GLHCVKF"/>
<dbReference type="OrthoDB" id="8498983at2759"/>
<dbReference type="PhylomeDB" id="Q925N4"/>
<dbReference type="TreeFam" id="TF331936"/>
<dbReference type="BioGRID-ORCS" id="114141">
    <property type="hits" value="3 hits in 79 CRISPR screens"/>
</dbReference>
<dbReference type="PRO" id="PR:Q925N4"/>
<dbReference type="Proteomes" id="UP000000589">
    <property type="component" value="Chromosome 16"/>
</dbReference>
<dbReference type="RNAct" id="Q925N4">
    <property type="molecule type" value="protein"/>
</dbReference>
<dbReference type="Bgee" id="ENSMUSG00000038148">
    <property type="expression patterns" value="Expressed in right kidney and 7 other cell types or tissues"/>
</dbReference>
<dbReference type="ExpressionAtlas" id="Q925N4">
    <property type="expression patterns" value="baseline and differential"/>
</dbReference>
<dbReference type="GO" id="GO:0005923">
    <property type="term" value="C:bicellular tight junction"/>
    <property type="evidence" value="ECO:0000314"/>
    <property type="project" value="MGI"/>
</dbReference>
<dbReference type="GO" id="GO:0005886">
    <property type="term" value="C:plasma membrane"/>
    <property type="evidence" value="ECO:0007669"/>
    <property type="project" value="UniProtKB-SubCell"/>
</dbReference>
<dbReference type="GO" id="GO:0070160">
    <property type="term" value="C:tight junction"/>
    <property type="evidence" value="ECO:0000250"/>
    <property type="project" value="UniProtKB"/>
</dbReference>
<dbReference type="GO" id="GO:0042802">
    <property type="term" value="F:identical protein binding"/>
    <property type="evidence" value="ECO:0000250"/>
    <property type="project" value="UniProtKB"/>
</dbReference>
<dbReference type="GO" id="GO:0160187">
    <property type="term" value="F:paracellular tight junction channel activity"/>
    <property type="evidence" value="ECO:0000250"/>
    <property type="project" value="UniProtKB"/>
</dbReference>
<dbReference type="GO" id="GO:0030165">
    <property type="term" value="F:PDZ domain binding"/>
    <property type="evidence" value="ECO:0000250"/>
    <property type="project" value="UniProtKB"/>
</dbReference>
<dbReference type="GO" id="GO:0005198">
    <property type="term" value="F:structural molecule activity"/>
    <property type="evidence" value="ECO:0007669"/>
    <property type="project" value="InterPro"/>
</dbReference>
<dbReference type="GO" id="GO:0016338">
    <property type="term" value="P:calcium-independent cell-cell adhesion via plasma membrane cell-adhesion molecules"/>
    <property type="evidence" value="ECO:0000250"/>
    <property type="project" value="UniProtKB"/>
</dbReference>
<dbReference type="GO" id="GO:0006811">
    <property type="term" value="P:monoatomic ion transport"/>
    <property type="evidence" value="ECO:0007669"/>
    <property type="project" value="UniProtKB-KW"/>
</dbReference>
<dbReference type="GO" id="GO:0160184">
    <property type="term" value="P:paracellular transport"/>
    <property type="evidence" value="ECO:0000315"/>
    <property type="project" value="UniProtKB"/>
</dbReference>
<dbReference type="GO" id="GO:0070293">
    <property type="term" value="P:renal absorption"/>
    <property type="evidence" value="ECO:0000315"/>
    <property type="project" value="UniProtKB"/>
</dbReference>
<dbReference type="FunFam" id="1.20.140.150:FF:000012">
    <property type="entry name" value="Claudin"/>
    <property type="match status" value="1"/>
</dbReference>
<dbReference type="Gene3D" id="1.20.140.150">
    <property type="match status" value="1"/>
</dbReference>
<dbReference type="InterPro" id="IPR006187">
    <property type="entry name" value="Claudin"/>
</dbReference>
<dbReference type="InterPro" id="IPR003927">
    <property type="entry name" value="Claudin16"/>
</dbReference>
<dbReference type="InterPro" id="IPR017974">
    <property type="entry name" value="Claudin_CS"/>
</dbReference>
<dbReference type="InterPro" id="IPR004031">
    <property type="entry name" value="PMP22/EMP/MP20/Claudin"/>
</dbReference>
<dbReference type="PANTHER" id="PTHR12002">
    <property type="entry name" value="CLAUDIN"/>
    <property type="match status" value="1"/>
</dbReference>
<dbReference type="Pfam" id="PF00822">
    <property type="entry name" value="PMP22_Claudin"/>
    <property type="match status" value="1"/>
</dbReference>
<dbReference type="PRINTS" id="PR01077">
    <property type="entry name" value="CLAUDIN"/>
</dbReference>
<dbReference type="PRINTS" id="PR01447">
    <property type="entry name" value="CLAUDIN16"/>
</dbReference>
<dbReference type="PROSITE" id="PS01346">
    <property type="entry name" value="CLAUDIN"/>
    <property type="match status" value="1"/>
</dbReference>
<sequence length="235" mass="26100">MKDLLQYAACFLAIFSTGFLIVATWTDCWMVNADDSLEVSTKCRGLWWECVTNAFDGIRTCDEYDSIYAEHPLKLVVTRALMITADILAGFGFITLLLGLDCVKFLPDDPQIKVRLCFVAGTTLLIAGTPGIIGSVWYAVDVYVERSSLVLHNIFLGIQYKFGWSCWLGMAGSLGCFLAGALLTCCLYLFKDVGPERNYPYAMRKPYSTAGVSMAKSYKAPRTETAKMYAVDTRV</sequence>
<gene>
    <name evidence="7 11" type="primary">Cldn16</name>
</gene>
<name>CLD16_MOUSE</name>
<comment type="function">
    <text evidence="2 4 5">Forms paracellular channels: coassembles with CLDN19 into tight junction strands with cation-selective channels through the strands, conveying epithelial permeability in a process known as paracellular tight junction permeability (By similarity) (PubMed:28028216). Involved in the maintenance of ion gradients along the nephron. In the thick ascending limb (TAL) of Henle's loop, facilitates sodium paracellular permeability from the interstitial compartment to the lumen, contributing to the lumen-positive transepithelial potential that drives paracellular magnesium and calcium reabsorption (PubMed:17442678, PubMed:28028216).</text>
</comment>
<comment type="catalytic activity">
    <reaction evidence="4 10">
        <text>Mg(2+)(in) = Mg(2+)(out)</text>
        <dbReference type="Rhea" id="RHEA:29827"/>
        <dbReference type="ChEBI" id="CHEBI:18420"/>
    </reaction>
</comment>
<comment type="catalytic activity">
    <reaction evidence="9">
        <text>Ca(2+)(in) = Ca(2+)(out)</text>
        <dbReference type="Rhea" id="RHEA:29671"/>
        <dbReference type="ChEBI" id="CHEBI:29108"/>
    </reaction>
</comment>
<comment type="catalytic activity">
    <reaction evidence="4">
        <text>Na(+)(in) = Na(+)(out)</text>
        <dbReference type="Rhea" id="RHEA:34963"/>
        <dbReference type="ChEBI" id="CHEBI:29101"/>
    </reaction>
</comment>
<comment type="catalytic activity">
    <reaction evidence="2">
        <text>K(+)(in) = K(+)(out)</text>
        <dbReference type="Rhea" id="RHEA:29463"/>
        <dbReference type="ChEBI" id="CHEBI:29103"/>
    </reaction>
</comment>
<comment type="catalytic activity">
    <reaction evidence="2">
        <text>Rb(+)(in) = Rb(+)(out)</text>
        <dbReference type="Rhea" id="RHEA:78547"/>
        <dbReference type="ChEBI" id="CHEBI:49847"/>
    </reaction>
</comment>
<comment type="catalytic activity">
    <reaction evidence="2">
        <text>Cs(+)(in) = Cs(+)(out)</text>
        <dbReference type="Rhea" id="RHEA:78555"/>
        <dbReference type="ChEBI" id="CHEBI:49547"/>
    </reaction>
</comment>
<comment type="catalytic activity">
    <reaction evidence="4">
        <text>Li(+)(in) = Li(+)(out)</text>
        <dbReference type="Rhea" id="RHEA:78551"/>
        <dbReference type="ChEBI" id="CHEBI:49713"/>
    </reaction>
</comment>
<comment type="subunit">
    <text evidence="1 2">Can form heteropolymeric tight junction strands with other claudins. Interacts with CLDN19 (By similarity). Cannot form tight junction strands on its own (By similarity). Interacts (via PDZ-binding motif TRV) with TJP1 (via PDZ domain) (By similarity).</text>
</comment>
<comment type="subcellular location">
    <subcellularLocation>
        <location evidence="5">Cell junction</location>
        <location evidence="5">Tight junction</location>
    </subcellularLocation>
    <subcellularLocation>
        <location evidence="5">Cell membrane</location>
        <topology evidence="3">Multi-pass membrane protein</topology>
    </subcellularLocation>
    <text evidence="2">Cotrafficks with CLDN19 from ER to tight junctions.</text>
</comment>
<comment type="tissue specificity">
    <text evidence="5">Expressed in the corticomedullary axis of the TAL, specifically in the cortex and the outer stripe of outer medulla (OSOM) zone (at protein level).</text>
</comment>
<comment type="domain">
    <text evidence="2">The first extracellular loop contains negatively charged amino acids that affect cation selectivity.</text>
</comment>
<comment type="similarity">
    <text evidence="8">Belongs to the claudin family.</text>
</comment>
<feature type="chain" id="PRO_0000144775" description="Claudin-16">
    <location>
        <begin position="1"/>
        <end position="235"/>
    </location>
</feature>
<feature type="topological domain" description="Cytoplasmic" evidence="3">
    <location>
        <begin position="1"/>
        <end position="3"/>
    </location>
</feature>
<feature type="transmembrane region" description="Helical" evidence="3">
    <location>
        <begin position="4"/>
        <end position="24"/>
    </location>
</feature>
<feature type="topological domain" description="Extracellular" evidence="3">
    <location>
        <begin position="25"/>
        <end position="79"/>
    </location>
</feature>
<feature type="transmembrane region" description="Helical" evidence="3">
    <location>
        <begin position="80"/>
        <end position="100"/>
    </location>
</feature>
<feature type="topological domain" description="Cytoplasmic" evidence="3">
    <location>
        <begin position="101"/>
        <end position="115"/>
    </location>
</feature>
<feature type="transmembrane region" description="Helical" evidence="3">
    <location>
        <begin position="116"/>
        <end position="136"/>
    </location>
</feature>
<feature type="topological domain" description="Extracellular" evidence="3">
    <location>
        <begin position="137"/>
        <end position="169"/>
    </location>
</feature>
<feature type="transmembrane region" description="Helical" evidence="3">
    <location>
        <begin position="170"/>
        <end position="190"/>
    </location>
</feature>
<feature type="topological domain" description="Cytoplasmic" evidence="3">
    <location>
        <begin position="191"/>
        <end position="235"/>
    </location>
</feature>
<feature type="short sequence motif" description="Interaction with TJP1" evidence="1">
    <location>
        <begin position="233"/>
        <end position="235"/>
    </location>
</feature>
<reference key="1">
    <citation type="journal article" date="2001" name="J. Am. Soc. Nephrol.">
        <title>Primary gene structure and expression studies of rodent paracellin-1.</title>
        <authorList>
            <person name="Weber S."/>
            <person name="Schlingmann K.P."/>
            <person name="Peters M."/>
            <person name="Nejsum L.N."/>
            <person name="Nielsen S."/>
            <person name="Engel H."/>
            <person name="Grzeschik K.H."/>
            <person name="Seyberth H.W."/>
            <person name="Grone H.J."/>
            <person name="Nusing R."/>
            <person name="Konrad M."/>
        </authorList>
    </citation>
    <scope>NUCLEOTIDE SEQUENCE [MRNA]</scope>
    <source>
        <strain>BALB/cJ</strain>
    </source>
</reference>
<reference key="2">
    <citation type="journal article" date="2005" name="Science">
        <title>The transcriptional landscape of the mammalian genome.</title>
        <authorList>
            <person name="Carninci P."/>
            <person name="Kasukawa T."/>
            <person name="Katayama S."/>
            <person name="Gough J."/>
            <person name="Frith M.C."/>
            <person name="Maeda N."/>
            <person name="Oyama R."/>
            <person name="Ravasi T."/>
            <person name="Lenhard B."/>
            <person name="Wells C."/>
            <person name="Kodzius R."/>
            <person name="Shimokawa K."/>
            <person name="Bajic V.B."/>
            <person name="Brenner S.E."/>
            <person name="Batalov S."/>
            <person name="Forrest A.R."/>
            <person name="Zavolan M."/>
            <person name="Davis M.J."/>
            <person name="Wilming L.G."/>
            <person name="Aidinis V."/>
            <person name="Allen J.E."/>
            <person name="Ambesi-Impiombato A."/>
            <person name="Apweiler R."/>
            <person name="Aturaliya R.N."/>
            <person name="Bailey T.L."/>
            <person name="Bansal M."/>
            <person name="Baxter L."/>
            <person name="Beisel K.W."/>
            <person name="Bersano T."/>
            <person name="Bono H."/>
            <person name="Chalk A.M."/>
            <person name="Chiu K.P."/>
            <person name="Choudhary V."/>
            <person name="Christoffels A."/>
            <person name="Clutterbuck D.R."/>
            <person name="Crowe M.L."/>
            <person name="Dalla E."/>
            <person name="Dalrymple B.P."/>
            <person name="de Bono B."/>
            <person name="Della Gatta G."/>
            <person name="di Bernardo D."/>
            <person name="Down T."/>
            <person name="Engstrom P."/>
            <person name="Fagiolini M."/>
            <person name="Faulkner G."/>
            <person name="Fletcher C.F."/>
            <person name="Fukushima T."/>
            <person name="Furuno M."/>
            <person name="Futaki S."/>
            <person name="Gariboldi M."/>
            <person name="Georgii-Hemming P."/>
            <person name="Gingeras T.R."/>
            <person name="Gojobori T."/>
            <person name="Green R.E."/>
            <person name="Gustincich S."/>
            <person name="Harbers M."/>
            <person name="Hayashi Y."/>
            <person name="Hensch T.K."/>
            <person name="Hirokawa N."/>
            <person name="Hill D."/>
            <person name="Huminiecki L."/>
            <person name="Iacono M."/>
            <person name="Ikeo K."/>
            <person name="Iwama A."/>
            <person name="Ishikawa T."/>
            <person name="Jakt M."/>
            <person name="Kanapin A."/>
            <person name="Katoh M."/>
            <person name="Kawasawa Y."/>
            <person name="Kelso J."/>
            <person name="Kitamura H."/>
            <person name="Kitano H."/>
            <person name="Kollias G."/>
            <person name="Krishnan S.P."/>
            <person name="Kruger A."/>
            <person name="Kummerfeld S.K."/>
            <person name="Kurochkin I.V."/>
            <person name="Lareau L.F."/>
            <person name="Lazarevic D."/>
            <person name="Lipovich L."/>
            <person name="Liu J."/>
            <person name="Liuni S."/>
            <person name="McWilliam S."/>
            <person name="Madan Babu M."/>
            <person name="Madera M."/>
            <person name="Marchionni L."/>
            <person name="Matsuda H."/>
            <person name="Matsuzawa S."/>
            <person name="Miki H."/>
            <person name="Mignone F."/>
            <person name="Miyake S."/>
            <person name="Morris K."/>
            <person name="Mottagui-Tabar S."/>
            <person name="Mulder N."/>
            <person name="Nakano N."/>
            <person name="Nakauchi H."/>
            <person name="Ng P."/>
            <person name="Nilsson R."/>
            <person name="Nishiguchi S."/>
            <person name="Nishikawa S."/>
            <person name="Nori F."/>
            <person name="Ohara O."/>
            <person name="Okazaki Y."/>
            <person name="Orlando V."/>
            <person name="Pang K.C."/>
            <person name="Pavan W.J."/>
            <person name="Pavesi G."/>
            <person name="Pesole G."/>
            <person name="Petrovsky N."/>
            <person name="Piazza S."/>
            <person name="Reed J."/>
            <person name="Reid J.F."/>
            <person name="Ring B.Z."/>
            <person name="Ringwald M."/>
            <person name="Rost B."/>
            <person name="Ruan Y."/>
            <person name="Salzberg S.L."/>
            <person name="Sandelin A."/>
            <person name="Schneider C."/>
            <person name="Schoenbach C."/>
            <person name="Sekiguchi K."/>
            <person name="Semple C.A."/>
            <person name="Seno S."/>
            <person name="Sessa L."/>
            <person name="Sheng Y."/>
            <person name="Shibata Y."/>
            <person name="Shimada H."/>
            <person name="Shimada K."/>
            <person name="Silva D."/>
            <person name="Sinclair B."/>
            <person name="Sperling S."/>
            <person name="Stupka E."/>
            <person name="Sugiura K."/>
            <person name="Sultana R."/>
            <person name="Takenaka Y."/>
            <person name="Taki K."/>
            <person name="Tammoja K."/>
            <person name="Tan S.L."/>
            <person name="Tang S."/>
            <person name="Taylor M.S."/>
            <person name="Tegner J."/>
            <person name="Teichmann S.A."/>
            <person name="Ueda H.R."/>
            <person name="van Nimwegen E."/>
            <person name="Verardo R."/>
            <person name="Wei C.L."/>
            <person name="Yagi K."/>
            <person name="Yamanishi H."/>
            <person name="Zabarovsky E."/>
            <person name="Zhu S."/>
            <person name="Zimmer A."/>
            <person name="Hide W."/>
            <person name="Bult C."/>
            <person name="Grimmond S.M."/>
            <person name="Teasdale R.D."/>
            <person name="Liu E.T."/>
            <person name="Brusic V."/>
            <person name="Quackenbush J."/>
            <person name="Wahlestedt C."/>
            <person name="Mattick J.S."/>
            <person name="Hume D.A."/>
            <person name="Kai C."/>
            <person name="Sasaki D."/>
            <person name="Tomaru Y."/>
            <person name="Fukuda S."/>
            <person name="Kanamori-Katayama M."/>
            <person name="Suzuki M."/>
            <person name="Aoki J."/>
            <person name="Arakawa T."/>
            <person name="Iida J."/>
            <person name="Imamura K."/>
            <person name="Itoh M."/>
            <person name="Kato T."/>
            <person name="Kawaji H."/>
            <person name="Kawagashira N."/>
            <person name="Kawashima T."/>
            <person name="Kojima M."/>
            <person name="Kondo S."/>
            <person name="Konno H."/>
            <person name="Nakano K."/>
            <person name="Ninomiya N."/>
            <person name="Nishio T."/>
            <person name="Okada M."/>
            <person name="Plessy C."/>
            <person name="Shibata K."/>
            <person name="Shiraki T."/>
            <person name="Suzuki S."/>
            <person name="Tagami M."/>
            <person name="Waki K."/>
            <person name="Watahiki A."/>
            <person name="Okamura-Oho Y."/>
            <person name="Suzuki H."/>
            <person name="Kawai J."/>
            <person name="Hayashizaki Y."/>
        </authorList>
    </citation>
    <scope>NUCLEOTIDE SEQUENCE [LARGE SCALE MRNA]</scope>
    <source>
        <strain>C57BL/6J</strain>
        <tissue>Kidney</tissue>
    </source>
</reference>
<reference key="3">
    <citation type="journal article" date="2007" name="J. Biol. Chem.">
        <title>Transgenic RNAi depletion of claudin-16 and the renal handling of magnesium.</title>
        <authorList>
            <person name="Hou J."/>
            <person name="Shan Q."/>
            <person name="Wang T."/>
            <person name="Gomes A.S."/>
            <person name="Yan Q."/>
            <person name="Paul D.L."/>
            <person name="Bleich M."/>
            <person name="Goodenough D.A."/>
        </authorList>
    </citation>
    <scope>FUNCTION</scope>
    <scope>TRANSPORTER ACTIVITY</scope>
</reference>
<reference key="4">
    <citation type="journal article" date="2017" name="Proc. Natl. Acad. Sci. U.S.A.">
        <title>Mosaic expression of claudins in thick ascending limbs of Henle results in spatial separation of paracellular Na+ and Mg2+ transport.</title>
        <authorList>
            <person name="Milatz S."/>
            <person name="Himmerkus N."/>
            <person name="Wulfmeyer V.C."/>
            <person name="Drewell H."/>
            <person name="Mutig K."/>
            <person name="Hou J."/>
            <person name="Breiderhoff T."/>
            <person name="Mueller D."/>
            <person name="Fromm M."/>
            <person name="Bleich M."/>
            <person name="Guenzel D."/>
        </authorList>
    </citation>
    <scope>FUNCTION</scope>
    <scope>TRANSPORTER ACTIVITY</scope>
    <scope>SUBCELLULAR LOCATION</scope>
    <scope>TISSUE SPECIFICITY</scope>
</reference>
<keyword id="KW-0965">Cell junction</keyword>
<keyword id="KW-1003">Cell membrane</keyword>
<keyword id="KW-0406">Ion transport</keyword>
<keyword id="KW-0460">Magnesium</keyword>
<keyword id="KW-0472">Membrane</keyword>
<keyword id="KW-1185">Reference proteome</keyword>
<keyword id="KW-0796">Tight junction</keyword>
<keyword id="KW-0812">Transmembrane</keyword>
<keyword id="KW-1133">Transmembrane helix</keyword>
<keyword id="KW-0813">Transport</keyword>